<reference key="1">
    <citation type="journal article" date="2005" name="Nature">
        <title>Sequencing of Aspergillus nidulans and comparative analysis with A. fumigatus and A. oryzae.</title>
        <authorList>
            <person name="Galagan J.E."/>
            <person name="Calvo S.E."/>
            <person name="Cuomo C."/>
            <person name="Ma L.-J."/>
            <person name="Wortman J.R."/>
            <person name="Batzoglou S."/>
            <person name="Lee S.-I."/>
            <person name="Bastuerkmen M."/>
            <person name="Spevak C.C."/>
            <person name="Clutterbuck J."/>
            <person name="Kapitonov V."/>
            <person name="Jurka J."/>
            <person name="Scazzocchio C."/>
            <person name="Farman M.L."/>
            <person name="Butler J."/>
            <person name="Purcell S."/>
            <person name="Harris S."/>
            <person name="Braus G.H."/>
            <person name="Draht O."/>
            <person name="Busch S."/>
            <person name="D'Enfert C."/>
            <person name="Bouchier C."/>
            <person name="Goldman G.H."/>
            <person name="Bell-Pedersen D."/>
            <person name="Griffiths-Jones S."/>
            <person name="Doonan J.H."/>
            <person name="Yu J."/>
            <person name="Vienken K."/>
            <person name="Pain A."/>
            <person name="Freitag M."/>
            <person name="Selker E.U."/>
            <person name="Archer D.B."/>
            <person name="Penalva M.A."/>
            <person name="Oakley B.R."/>
            <person name="Momany M."/>
            <person name="Tanaka T."/>
            <person name="Kumagai T."/>
            <person name="Asai K."/>
            <person name="Machida M."/>
            <person name="Nierman W.C."/>
            <person name="Denning D.W."/>
            <person name="Caddick M.X."/>
            <person name="Hynes M."/>
            <person name="Paoletti M."/>
            <person name="Fischer R."/>
            <person name="Miller B.L."/>
            <person name="Dyer P.S."/>
            <person name="Sachs M.S."/>
            <person name="Osmani S.A."/>
            <person name="Birren B.W."/>
        </authorList>
    </citation>
    <scope>NUCLEOTIDE SEQUENCE [LARGE SCALE GENOMIC DNA]</scope>
    <source>
        <strain>FGSC A4 / ATCC 38163 / CBS 112.46 / NRRL 194 / M139</strain>
    </source>
</reference>
<reference key="2">
    <citation type="journal article" date="2009" name="Fungal Genet. Biol.">
        <title>The 2008 update of the Aspergillus nidulans genome annotation: a community effort.</title>
        <authorList>
            <person name="Wortman J.R."/>
            <person name="Gilsenan J.M."/>
            <person name="Joardar V."/>
            <person name="Deegan J."/>
            <person name="Clutterbuck J."/>
            <person name="Andersen M.R."/>
            <person name="Archer D."/>
            <person name="Bencina M."/>
            <person name="Braus G."/>
            <person name="Coutinho P."/>
            <person name="von Dohren H."/>
            <person name="Doonan J."/>
            <person name="Driessen A.J."/>
            <person name="Durek P."/>
            <person name="Espeso E."/>
            <person name="Fekete E."/>
            <person name="Flipphi M."/>
            <person name="Estrada C.G."/>
            <person name="Geysens S."/>
            <person name="Goldman G."/>
            <person name="de Groot P.W."/>
            <person name="Hansen K."/>
            <person name="Harris S.D."/>
            <person name="Heinekamp T."/>
            <person name="Helmstaedt K."/>
            <person name="Henrissat B."/>
            <person name="Hofmann G."/>
            <person name="Homan T."/>
            <person name="Horio T."/>
            <person name="Horiuchi H."/>
            <person name="James S."/>
            <person name="Jones M."/>
            <person name="Karaffa L."/>
            <person name="Karanyi Z."/>
            <person name="Kato M."/>
            <person name="Keller N."/>
            <person name="Kelly D.E."/>
            <person name="Kiel J.A."/>
            <person name="Kim J.M."/>
            <person name="van der Klei I.J."/>
            <person name="Klis F.M."/>
            <person name="Kovalchuk A."/>
            <person name="Krasevec N."/>
            <person name="Kubicek C.P."/>
            <person name="Liu B."/>
            <person name="Maccabe A."/>
            <person name="Meyer V."/>
            <person name="Mirabito P."/>
            <person name="Miskei M."/>
            <person name="Mos M."/>
            <person name="Mullins J."/>
            <person name="Nelson D.R."/>
            <person name="Nielsen J."/>
            <person name="Oakley B.R."/>
            <person name="Osmani S.A."/>
            <person name="Pakula T."/>
            <person name="Paszewski A."/>
            <person name="Paulsen I."/>
            <person name="Pilsyk S."/>
            <person name="Pocsi I."/>
            <person name="Punt P.J."/>
            <person name="Ram A.F."/>
            <person name="Ren Q."/>
            <person name="Robellet X."/>
            <person name="Robson G."/>
            <person name="Seiboth B."/>
            <person name="van Solingen P."/>
            <person name="Specht T."/>
            <person name="Sun J."/>
            <person name="Taheri-Talesh N."/>
            <person name="Takeshita N."/>
            <person name="Ussery D."/>
            <person name="vanKuyk P.A."/>
            <person name="Visser H."/>
            <person name="van de Vondervoort P.J."/>
            <person name="de Vries R.P."/>
            <person name="Walton J."/>
            <person name="Xiang X."/>
            <person name="Xiong Y."/>
            <person name="Zeng A.P."/>
            <person name="Brandt B.W."/>
            <person name="Cornell M.J."/>
            <person name="van den Hondel C.A."/>
            <person name="Visser J."/>
            <person name="Oliver S.G."/>
            <person name="Turner G."/>
        </authorList>
    </citation>
    <scope>GENOME REANNOTATION</scope>
    <source>
        <strain>FGSC A4 / ATCC 38163 / CBS 112.46 / NRRL 194 / M139</strain>
    </source>
</reference>
<organism>
    <name type="scientific">Emericella nidulans (strain FGSC A4 / ATCC 38163 / CBS 112.46 / NRRL 194 / M139)</name>
    <name type="common">Aspergillus nidulans</name>
    <dbReference type="NCBI Taxonomy" id="227321"/>
    <lineage>
        <taxon>Eukaryota</taxon>
        <taxon>Fungi</taxon>
        <taxon>Dikarya</taxon>
        <taxon>Ascomycota</taxon>
        <taxon>Pezizomycotina</taxon>
        <taxon>Eurotiomycetes</taxon>
        <taxon>Eurotiomycetidae</taxon>
        <taxon>Eurotiales</taxon>
        <taxon>Aspergillaceae</taxon>
        <taxon>Aspergillus</taxon>
        <taxon>Aspergillus subgen. Nidulantes</taxon>
    </lineage>
</organism>
<keyword id="KW-0963">Cytoplasm</keyword>
<keyword id="KW-0396">Initiation factor</keyword>
<keyword id="KW-0539">Nucleus</keyword>
<keyword id="KW-0597">Phosphoprotein</keyword>
<keyword id="KW-0648">Protein biosynthesis</keyword>
<keyword id="KW-1185">Reference proteome</keyword>
<keyword id="KW-0690">Ribosome biogenesis</keyword>
<gene>
    <name type="primary">tif6</name>
    <name type="ORF">AN8824</name>
</gene>
<comment type="function">
    <text evidence="1">Binds to the 60S ribosomal subunit and prevents its association with the 40S ribosomal subunit to form the 80S initiation complex in the cytoplasm. Is also involved in ribosome biogenesis. Associates with pre-60S subunits in the nucleus and is involved in its nuclear export.</text>
</comment>
<comment type="subunit">
    <text evidence="1">Monomer. Associates with the 60S ribosomal subunit.</text>
</comment>
<comment type="subcellular location">
    <subcellularLocation>
        <location evidence="1">Cytoplasm</location>
    </subcellularLocation>
    <subcellularLocation>
        <location evidence="1">Nucleus</location>
        <location evidence="1">Nucleolus</location>
    </subcellularLocation>
    <text evidence="1">Shuttles between cytoplasm and nucleus/nucleolus.</text>
</comment>
<comment type="PTM">
    <text evidence="1">Phosphorylation at Ser-174 and Ser-175 promotes nuclear export.</text>
</comment>
<comment type="similarity">
    <text evidence="1">Belongs to the eIF-6 family.</text>
</comment>
<dbReference type="EMBL" id="AACD01000162">
    <property type="protein sequence ID" value="EAA60112.1"/>
    <property type="molecule type" value="Genomic_DNA"/>
</dbReference>
<dbReference type="EMBL" id="BN001303">
    <property type="protein sequence ID" value="CBF77941.1"/>
    <property type="molecule type" value="Genomic_DNA"/>
</dbReference>
<dbReference type="RefSeq" id="XP_682093.1">
    <property type="nucleotide sequence ID" value="XM_677001.1"/>
</dbReference>
<dbReference type="SMR" id="Q5ASA6"/>
<dbReference type="FunCoup" id="Q5ASA6">
    <property type="interactions" value="1049"/>
</dbReference>
<dbReference type="STRING" id="227321.Q5ASA6"/>
<dbReference type="EnsemblFungi" id="CBF77941">
    <property type="protein sequence ID" value="CBF77941"/>
    <property type="gene ID" value="ANIA_08824"/>
</dbReference>
<dbReference type="KEGG" id="ani:ANIA_08824"/>
<dbReference type="VEuPathDB" id="FungiDB:AN8824"/>
<dbReference type="eggNOG" id="KOG3185">
    <property type="taxonomic scope" value="Eukaryota"/>
</dbReference>
<dbReference type="HOGENOM" id="CLU_071894_0_0_1"/>
<dbReference type="InParanoid" id="Q5ASA6"/>
<dbReference type="OMA" id="WCAFCGM"/>
<dbReference type="OrthoDB" id="4155914at2759"/>
<dbReference type="Proteomes" id="UP000000560">
    <property type="component" value="Chromosome III"/>
</dbReference>
<dbReference type="GO" id="GO:0005829">
    <property type="term" value="C:cytosol"/>
    <property type="evidence" value="ECO:0000318"/>
    <property type="project" value="GO_Central"/>
</dbReference>
<dbReference type="GO" id="GO:0005730">
    <property type="term" value="C:nucleolus"/>
    <property type="evidence" value="ECO:0007669"/>
    <property type="project" value="UniProtKB-SubCell"/>
</dbReference>
<dbReference type="GO" id="GO:0005634">
    <property type="term" value="C:nucleus"/>
    <property type="evidence" value="ECO:0000318"/>
    <property type="project" value="GO_Central"/>
</dbReference>
<dbReference type="GO" id="GO:0030687">
    <property type="term" value="C:preribosome, large subunit precursor"/>
    <property type="evidence" value="ECO:0007669"/>
    <property type="project" value="EnsemblFungi"/>
</dbReference>
<dbReference type="GO" id="GO:0043023">
    <property type="term" value="F:ribosomal large subunit binding"/>
    <property type="evidence" value="ECO:0000318"/>
    <property type="project" value="GO_Central"/>
</dbReference>
<dbReference type="GO" id="GO:0003743">
    <property type="term" value="F:translation initiation factor activity"/>
    <property type="evidence" value="ECO:0007669"/>
    <property type="project" value="UniProtKB-UniRule"/>
</dbReference>
<dbReference type="GO" id="GO:1902626">
    <property type="term" value="P:assembly of large subunit precursor of preribosome"/>
    <property type="evidence" value="ECO:0000318"/>
    <property type="project" value="GO_Central"/>
</dbReference>
<dbReference type="GO" id="GO:0042256">
    <property type="term" value="P:cytosolic ribosome assembly"/>
    <property type="evidence" value="ECO:0007669"/>
    <property type="project" value="UniProtKB-UniRule"/>
</dbReference>
<dbReference type="GO" id="GO:0000460">
    <property type="term" value="P:maturation of 5.8S rRNA"/>
    <property type="evidence" value="ECO:0000318"/>
    <property type="project" value="GO_Central"/>
</dbReference>
<dbReference type="GO" id="GO:0000466">
    <property type="term" value="P:maturation of 5.8S rRNA from tricistronic rRNA transcript (SSU-rRNA, 5.8S rRNA, LSU-rRNA)"/>
    <property type="evidence" value="ECO:0007669"/>
    <property type="project" value="EnsemblFungi"/>
</dbReference>
<dbReference type="GO" id="GO:0000470">
    <property type="term" value="P:maturation of LSU-rRNA"/>
    <property type="evidence" value="ECO:0000318"/>
    <property type="project" value="GO_Central"/>
</dbReference>
<dbReference type="GO" id="GO:0000463">
    <property type="term" value="P:maturation of LSU-rRNA from tricistronic rRNA transcript (SSU-rRNA, 5.8S rRNA, LSU-rRNA)"/>
    <property type="evidence" value="ECO:0007669"/>
    <property type="project" value="EnsemblFungi"/>
</dbReference>
<dbReference type="GO" id="GO:0000054">
    <property type="term" value="P:ribosomal subunit export from nucleus"/>
    <property type="evidence" value="ECO:0000318"/>
    <property type="project" value="GO_Central"/>
</dbReference>
<dbReference type="CDD" id="cd00527">
    <property type="entry name" value="IF6"/>
    <property type="match status" value="1"/>
</dbReference>
<dbReference type="FunFam" id="3.75.10.10:FF:000001">
    <property type="entry name" value="Eukaryotic translation initiation factor 6"/>
    <property type="match status" value="1"/>
</dbReference>
<dbReference type="Gene3D" id="3.75.10.10">
    <property type="entry name" value="L-arginine/glycine Amidinotransferase, Chain A"/>
    <property type="match status" value="1"/>
</dbReference>
<dbReference type="HAMAP" id="MF_00032">
    <property type="entry name" value="eIF_6"/>
    <property type="match status" value="1"/>
</dbReference>
<dbReference type="InterPro" id="IPR002769">
    <property type="entry name" value="eIF6"/>
</dbReference>
<dbReference type="NCBIfam" id="TIGR00323">
    <property type="entry name" value="eIF-6"/>
    <property type="match status" value="1"/>
</dbReference>
<dbReference type="PANTHER" id="PTHR10784">
    <property type="entry name" value="TRANSLATION INITIATION FACTOR 6"/>
    <property type="match status" value="1"/>
</dbReference>
<dbReference type="Pfam" id="PF01912">
    <property type="entry name" value="eIF-6"/>
    <property type="match status" value="1"/>
</dbReference>
<dbReference type="PIRSF" id="PIRSF006413">
    <property type="entry name" value="IF-6"/>
    <property type="match status" value="1"/>
</dbReference>
<dbReference type="SMART" id="SM00654">
    <property type="entry name" value="eIF6"/>
    <property type="match status" value="1"/>
</dbReference>
<dbReference type="SUPFAM" id="SSF55909">
    <property type="entry name" value="Pentein"/>
    <property type="match status" value="1"/>
</dbReference>
<feature type="chain" id="PRO_0000402105" description="Eukaryotic translation initiation factor 6">
    <location>
        <begin position="1"/>
        <end position="247"/>
    </location>
</feature>
<feature type="modified residue" description="Phosphoserine; by CK1" evidence="1">
    <location>
        <position position="174"/>
    </location>
</feature>
<feature type="modified residue" description="Phosphoserine; by CK1" evidence="1">
    <location>
        <position position="175"/>
    </location>
</feature>
<protein>
    <recommendedName>
        <fullName evidence="1">Eukaryotic translation initiation factor 6</fullName>
        <shortName evidence="1">eIF-6</shortName>
    </recommendedName>
</protein>
<proteinExistence type="inferred from homology"/>
<evidence type="ECO:0000255" key="1">
    <source>
        <dbReference type="HAMAP-Rule" id="MF_03132"/>
    </source>
</evidence>
<sequence length="247" mass="26511">MAVRAQFENSNEVGVFSRLTNSYALVAIGASENFYSVFEAELQDVIPICHATIAGTRIIGRLTAGNRKGLLVPTTTTDQELQHLRNTLPDDVKIQRIEERLSALGNVICCNDHVALIHPDLERETEEIIADVLGVEVFRQTIADNVLTGSYMALSNQGGIVHPKTSIRDQDELSSLLQVPLVAGSVNRGSPVVGAGLVVNDWLAVTGLDTTATELSVIESVFRLGENGPGGIGQGVANKDSIVESFY</sequence>
<accession>Q5ASA6</accession>
<accession>C8V9K9</accession>
<name>IF6_EMENI</name>